<reference key="1">
    <citation type="journal article" date="1996" name="Nucleic Acids Res.">
        <title>Complete sequence analysis of the genome of the bacterium Mycoplasma pneumoniae.</title>
        <authorList>
            <person name="Himmelreich R."/>
            <person name="Hilbert H."/>
            <person name="Plagens H."/>
            <person name="Pirkl E."/>
            <person name="Li B.-C."/>
            <person name="Herrmann R."/>
        </authorList>
    </citation>
    <scope>NUCLEOTIDE SEQUENCE [LARGE SCALE GENOMIC DNA]</scope>
    <source>
        <strain>ATCC 29342 / M129 / Subtype 1</strain>
    </source>
</reference>
<gene>
    <name type="ordered locus">MPN_649</name>
    <name type="ORF">E09_orf136L</name>
    <name type="ORF">MP193</name>
</gene>
<evidence type="ECO:0000305" key="1"/>
<name>Y649_MYCPN</name>
<protein>
    <recommendedName>
        <fullName>Uncharacterized protein MPN_649</fullName>
    </recommendedName>
</protein>
<dbReference type="EMBL" id="U00089">
    <property type="protein sequence ID" value="AAB95841.1"/>
    <property type="molecule type" value="Genomic_DNA"/>
</dbReference>
<dbReference type="PIR" id="S73519">
    <property type="entry name" value="S73519"/>
</dbReference>
<dbReference type="RefSeq" id="NP_110338.1">
    <property type="nucleotide sequence ID" value="NC_000912.1"/>
</dbReference>
<dbReference type="RefSeq" id="WP_010875006.1">
    <property type="nucleotide sequence ID" value="NZ_OU342337.1"/>
</dbReference>
<dbReference type="IntAct" id="P75148">
    <property type="interactions" value="1"/>
</dbReference>
<dbReference type="EnsemblBacteria" id="AAB95841">
    <property type="protein sequence ID" value="AAB95841"/>
    <property type="gene ID" value="MPN_649"/>
</dbReference>
<dbReference type="KEGG" id="mpn:MPN_649"/>
<dbReference type="PATRIC" id="fig|272634.6.peg.712"/>
<dbReference type="HOGENOM" id="CLU_152513_0_0_14"/>
<dbReference type="BioCyc" id="MPNE272634:G1GJ3-1034-MONOMER"/>
<dbReference type="Proteomes" id="UP000000808">
    <property type="component" value="Chromosome"/>
</dbReference>
<dbReference type="InterPro" id="IPR001595">
    <property type="entry name" value="Lipoprotein_3"/>
</dbReference>
<dbReference type="Pfam" id="PF00938">
    <property type="entry name" value="Lipoprotein_3"/>
    <property type="match status" value="1"/>
</dbReference>
<organism>
    <name type="scientific">Mycoplasma pneumoniae (strain ATCC 29342 / M129 / Subtype 1)</name>
    <name type="common">Mycoplasmoides pneumoniae</name>
    <dbReference type="NCBI Taxonomy" id="272634"/>
    <lineage>
        <taxon>Bacteria</taxon>
        <taxon>Bacillati</taxon>
        <taxon>Mycoplasmatota</taxon>
        <taxon>Mycoplasmoidales</taxon>
        <taxon>Mycoplasmoidaceae</taxon>
        <taxon>Mycoplasmoides</taxon>
    </lineage>
</organism>
<accession>P75148</accession>
<keyword id="KW-1185">Reference proteome</keyword>
<proteinExistence type="inferred from homology"/>
<comment type="similarity">
    <text evidence="1">Belongs to the MG439/MG440 family.</text>
</comment>
<sequence length="136" mass="15972">MKISLSTSLFSIEQKVEYFNLNYQSLSDFSVVAKLNYTFTWYGNDFSIGFAPKKGEKLYFDLFFTFKASPNHPFAAENFKPDSEAIDFYVSFSWRLEGKDEVSKKLFELSVFGRARAFQIDDYKINLFSYLVYVIR</sequence>
<feature type="chain" id="PRO_0000210703" description="Uncharacterized protein MPN_649">
    <location>
        <begin position="1"/>
        <end position="136"/>
    </location>
</feature>